<gene>
    <name type="primary">SCPL20</name>
    <name type="ordered locus">At4g12910</name>
    <name type="ORF">F25G13.7</name>
</gene>
<keyword id="KW-0121">Carboxypeptidase</keyword>
<keyword id="KW-1015">Disulfide bond</keyword>
<keyword id="KW-0325">Glycoprotein</keyword>
<keyword id="KW-0378">Hydrolase</keyword>
<keyword id="KW-0645">Protease</keyword>
<keyword id="KW-1185">Reference proteome</keyword>
<keyword id="KW-0964">Secreted</keyword>
<keyword id="KW-0732">Signal</keyword>
<evidence type="ECO:0000250" key="1"/>
<evidence type="ECO:0000255" key="2"/>
<evidence type="ECO:0000269" key="3">
    <source>
    </source>
</evidence>
<evidence type="ECO:0000305" key="4"/>
<proteinExistence type="evidence at transcript level"/>
<protein>
    <recommendedName>
        <fullName>Serine carboxypeptidase-like 20</fullName>
        <ecNumber>3.4.16.-</ecNumber>
    </recommendedName>
</protein>
<sequence length="497" mass="55833">MSIITMVWLMKVFVFVTLLSLVFVITESAPESALITKLPGFEGTFPSKHYSGYVTIDKEHGKNLWYYFIESEKNPSKDPVVLWLNGGPGCSSMDGFVYEHGPFNFELPKKNNSLPLLHLNPYSWSKVSNIIYLDSPVGVGFSYSNNKSDYITGDIKTAVDSHAFLLKWFQMFPEFQSNPFFISGESYAGVYVPTLASEVVIGNKNGVKPALNFKGYLVGNGVADPKFDGNAFVPFAHGMGLISDELFENVTKACKGNFYEIEGLECEEQYTKVNDDTNQLNIYNILEPCYHGTSLSAFDIRSLPSSLLQLGKTEKRLPIRKRMFGRAWPVRAPVHPGIVPSWSQLLADVTVPCIDDRVATAWLNDPEIRKAIHTKEESEIGRWELCSGKLSFYHDAGSMIDFHRNLTLSGYRALIYSGDHDMCVPFTGSEAWTKSLGYKVIDEWRAWISNDQVAGYTQGYANNLTFLTIKGAGHTVPEYKPREALDFYSRFLEGSKI</sequence>
<dbReference type="EC" id="3.4.16.-"/>
<dbReference type="EMBL" id="AL079349">
    <property type="protein sequence ID" value="CAB53091.1"/>
    <property type="status" value="ALT_SEQ"/>
    <property type="molecule type" value="Genomic_DNA"/>
</dbReference>
<dbReference type="EMBL" id="AL161535">
    <property type="protein sequence ID" value="CAB78333.1"/>
    <property type="status" value="ALT_SEQ"/>
    <property type="molecule type" value="Genomic_DNA"/>
</dbReference>
<dbReference type="EMBL" id="CP002687">
    <property type="protein sequence ID" value="AEE83202.1"/>
    <property type="molecule type" value="Genomic_DNA"/>
</dbReference>
<dbReference type="EMBL" id="AY136365">
    <property type="protein sequence ID" value="AAM97031.1"/>
    <property type="molecule type" value="mRNA"/>
</dbReference>
<dbReference type="EMBL" id="BT000181">
    <property type="protein sequence ID" value="AAN15500.1"/>
    <property type="molecule type" value="mRNA"/>
</dbReference>
<dbReference type="PIR" id="A85139">
    <property type="entry name" value="A85139"/>
</dbReference>
<dbReference type="RefSeq" id="NP_193027.5">
    <property type="nucleotide sequence ID" value="NM_117360.8"/>
</dbReference>
<dbReference type="SMR" id="Q8L7B2"/>
<dbReference type="FunCoup" id="Q8L7B2">
    <property type="interactions" value="1094"/>
</dbReference>
<dbReference type="STRING" id="3702.Q8L7B2"/>
<dbReference type="ESTHER" id="arath-SCP20">
    <property type="family name" value="Carboxypeptidase_S10"/>
</dbReference>
<dbReference type="MEROPS" id="S10.A11"/>
<dbReference type="GlyCosmos" id="Q8L7B2">
    <property type="glycosylation" value="5 sites, No reported glycans"/>
</dbReference>
<dbReference type="GlyGen" id="Q8L7B2">
    <property type="glycosylation" value="5 sites"/>
</dbReference>
<dbReference type="PaxDb" id="3702-AT4G12910.1"/>
<dbReference type="ProteomicsDB" id="226627"/>
<dbReference type="EnsemblPlants" id="AT4G12910.1">
    <property type="protein sequence ID" value="AT4G12910.1"/>
    <property type="gene ID" value="AT4G12910"/>
</dbReference>
<dbReference type="GeneID" id="826903"/>
<dbReference type="Gramene" id="AT4G12910.1">
    <property type="protein sequence ID" value="AT4G12910.1"/>
    <property type="gene ID" value="AT4G12910"/>
</dbReference>
<dbReference type="KEGG" id="ath:AT4G12910"/>
<dbReference type="Araport" id="AT4G12910"/>
<dbReference type="TAIR" id="AT4G12910">
    <property type="gene designation" value="SCPL20"/>
</dbReference>
<dbReference type="eggNOG" id="KOG1282">
    <property type="taxonomic scope" value="Eukaryota"/>
</dbReference>
<dbReference type="HOGENOM" id="CLU_008523_0_1_1"/>
<dbReference type="InParanoid" id="Q8L7B2"/>
<dbReference type="OMA" id="GRFLHYW"/>
<dbReference type="PhylomeDB" id="Q8L7B2"/>
<dbReference type="PRO" id="PR:Q8L7B2"/>
<dbReference type="Proteomes" id="UP000006548">
    <property type="component" value="Chromosome 4"/>
</dbReference>
<dbReference type="ExpressionAtlas" id="Q8L7B2">
    <property type="expression patterns" value="baseline and differential"/>
</dbReference>
<dbReference type="GO" id="GO:0005576">
    <property type="term" value="C:extracellular region"/>
    <property type="evidence" value="ECO:0007669"/>
    <property type="project" value="UniProtKB-SubCell"/>
</dbReference>
<dbReference type="GO" id="GO:0005777">
    <property type="term" value="C:peroxisome"/>
    <property type="evidence" value="ECO:0000314"/>
    <property type="project" value="TAIR"/>
</dbReference>
<dbReference type="GO" id="GO:0000325">
    <property type="term" value="C:plant-type vacuole"/>
    <property type="evidence" value="ECO:0007005"/>
    <property type="project" value="TAIR"/>
</dbReference>
<dbReference type="GO" id="GO:0004185">
    <property type="term" value="F:serine-type carboxypeptidase activity"/>
    <property type="evidence" value="ECO:0007669"/>
    <property type="project" value="InterPro"/>
</dbReference>
<dbReference type="GO" id="GO:0006508">
    <property type="term" value="P:proteolysis"/>
    <property type="evidence" value="ECO:0007669"/>
    <property type="project" value="UniProtKB-KW"/>
</dbReference>
<dbReference type="FunFam" id="3.40.50.11320:FF:000002">
    <property type="entry name" value="Carboxypeptidase"/>
    <property type="match status" value="1"/>
</dbReference>
<dbReference type="FunFam" id="3.40.50.1820:FF:000143">
    <property type="entry name" value="Carboxypeptidase"/>
    <property type="match status" value="1"/>
</dbReference>
<dbReference type="Gene3D" id="3.40.50.11320">
    <property type="match status" value="1"/>
</dbReference>
<dbReference type="Gene3D" id="6.10.250.940">
    <property type="match status" value="1"/>
</dbReference>
<dbReference type="Gene3D" id="3.40.50.1820">
    <property type="entry name" value="alpha/beta hydrolase"/>
    <property type="match status" value="1"/>
</dbReference>
<dbReference type="InterPro" id="IPR029058">
    <property type="entry name" value="AB_hydrolase_fold"/>
</dbReference>
<dbReference type="InterPro" id="IPR001563">
    <property type="entry name" value="Peptidase_S10"/>
</dbReference>
<dbReference type="InterPro" id="IPR033124">
    <property type="entry name" value="Ser_caboxypep_his_AS"/>
</dbReference>
<dbReference type="InterPro" id="IPR018202">
    <property type="entry name" value="Ser_caboxypep_ser_AS"/>
</dbReference>
<dbReference type="PANTHER" id="PTHR11802:SF254">
    <property type="entry name" value="SERINE CARBOXYPEPTIDASE-LIKE 20"/>
    <property type="match status" value="1"/>
</dbReference>
<dbReference type="PANTHER" id="PTHR11802">
    <property type="entry name" value="SERINE PROTEASE FAMILY S10 SERINE CARBOXYPEPTIDASE"/>
    <property type="match status" value="1"/>
</dbReference>
<dbReference type="Pfam" id="PF00450">
    <property type="entry name" value="Peptidase_S10"/>
    <property type="match status" value="1"/>
</dbReference>
<dbReference type="PRINTS" id="PR00724">
    <property type="entry name" value="CRBOXYPTASEC"/>
</dbReference>
<dbReference type="SUPFAM" id="SSF53474">
    <property type="entry name" value="alpha/beta-Hydrolases"/>
    <property type="match status" value="1"/>
</dbReference>
<dbReference type="PROSITE" id="PS00560">
    <property type="entry name" value="CARBOXYPEPT_SER_HIS"/>
    <property type="match status" value="1"/>
</dbReference>
<dbReference type="PROSITE" id="PS00131">
    <property type="entry name" value="CARBOXYPEPT_SER_SER"/>
    <property type="match status" value="1"/>
</dbReference>
<accession>Q8L7B2</accession>
<accession>Q9SV78</accession>
<comment type="function">
    <text evidence="1">Probable carboxypeptidase.</text>
</comment>
<comment type="subcellular location">
    <subcellularLocation>
        <location evidence="4">Secreted</location>
    </subcellularLocation>
</comment>
<comment type="tissue specificity">
    <text evidence="3">Ubiquitous.</text>
</comment>
<comment type="similarity">
    <text evidence="4">Belongs to the peptidase S10 family.</text>
</comment>
<comment type="sequence caution" evidence="4">
    <conflict type="erroneous gene model prediction">
        <sequence resource="EMBL-CDS" id="CAB53091"/>
    </conflict>
</comment>
<comment type="sequence caution" evidence="4">
    <conflict type="frameshift">
        <sequence resource="EMBL-CDS" id="CAB53091"/>
    </conflict>
</comment>
<comment type="sequence caution" evidence="4">
    <conflict type="erroneous gene model prediction">
        <sequence resource="EMBL-CDS" id="CAB78333"/>
    </conflict>
</comment>
<comment type="sequence caution" evidence="4">
    <conflict type="frameshift">
        <sequence resource="EMBL-CDS" id="CAB78333"/>
    </conflict>
</comment>
<feature type="signal peptide" evidence="2">
    <location>
        <begin position="1"/>
        <end position="29"/>
    </location>
</feature>
<feature type="chain" id="PRO_0000274636" description="Serine carboxypeptidase-like 20">
    <location>
        <begin position="30"/>
        <end position="497"/>
    </location>
</feature>
<feature type="short sequence motif" description="Microbody targeting signal" evidence="2">
    <location>
        <begin position="495"/>
        <end position="497"/>
    </location>
</feature>
<feature type="active site" evidence="1">
    <location>
        <position position="186"/>
    </location>
</feature>
<feature type="active site" evidence="1">
    <location>
        <position position="421"/>
    </location>
</feature>
<feature type="active site" evidence="1">
    <location>
        <position position="474"/>
    </location>
</feature>
<feature type="glycosylation site" description="N-linked (GlcNAc...) asparagine" evidence="2">
    <location>
        <position position="111"/>
    </location>
</feature>
<feature type="glycosylation site" description="N-linked (GlcNAc...) asparagine" evidence="2">
    <location>
        <position position="146"/>
    </location>
</feature>
<feature type="glycosylation site" description="N-linked (GlcNAc...) asparagine" evidence="2">
    <location>
        <position position="249"/>
    </location>
</feature>
<feature type="glycosylation site" description="N-linked (GlcNAc...) asparagine" evidence="2">
    <location>
        <position position="405"/>
    </location>
</feature>
<feature type="glycosylation site" description="N-linked (GlcNAc...) asparagine" evidence="2">
    <location>
        <position position="463"/>
    </location>
</feature>
<feature type="disulfide bond" evidence="1">
    <location>
        <begin position="90"/>
        <end position="386"/>
    </location>
</feature>
<feature type="disulfide bond" evidence="1">
    <location>
        <begin position="254"/>
        <end position="266"/>
    </location>
</feature>
<feature type="disulfide bond" evidence="1">
    <location>
        <begin position="289"/>
        <end position="353"/>
    </location>
</feature>
<feature type="sequence conflict" description="In Ref. 3; AAM97031/AAN15500." evidence="4" ref="3">
    <original>G</original>
    <variation>V</variation>
    <location>
        <position position="221"/>
    </location>
</feature>
<reference key="1">
    <citation type="journal article" date="1999" name="Nature">
        <title>Sequence and analysis of chromosome 4 of the plant Arabidopsis thaliana.</title>
        <authorList>
            <person name="Mayer K.F.X."/>
            <person name="Schueller C."/>
            <person name="Wambutt R."/>
            <person name="Murphy G."/>
            <person name="Volckaert G."/>
            <person name="Pohl T."/>
            <person name="Duesterhoeft A."/>
            <person name="Stiekema W."/>
            <person name="Entian K.-D."/>
            <person name="Terryn N."/>
            <person name="Harris B."/>
            <person name="Ansorge W."/>
            <person name="Brandt P."/>
            <person name="Grivell L.A."/>
            <person name="Rieger M."/>
            <person name="Weichselgartner M."/>
            <person name="de Simone V."/>
            <person name="Obermaier B."/>
            <person name="Mache R."/>
            <person name="Mueller M."/>
            <person name="Kreis M."/>
            <person name="Delseny M."/>
            <person name="Puigdomenech P."/>
            <person name="Watson M."/>
            <person name="Schmidtheini T."/>
            <person name="Reichert B."/>
            <person name="Portetelle D."/>
            <person name="Perez-Alonso M."/>
            <person name="Boutry M."/>
            <person name="Bancroft I."/>
            <person name="Vos P."/>
            <person name="Hoheisel J."/>
            <person name="Zimmermann W."/>
            <person name="Wedler H."/>
            <person name="Ridley P."/>
            <person name="Langham S.-A."/>
            <person name="McCullagh B."/>
            <person name="Bilham L."/>
            <person name="Robben J."/>
            <person name="van der Schueren J."/>
            <person name="Grymonprez B."/>
            <person name="Chuang Y.-J."/>
            <person name="Vandenbussche F."/>
            <person name="Braeken M."/>
            <person name="Weltjens I."/>
            <person name="Voet M."/>
            <person name="Bastiaens I."/>
            <person name="Aert R."/>
            <person name="Defoor E."/>
            <person name="Weitzenegger T."/>
            <person name="Bothe G."/>
            <person name="Ramsperger U."/>
            <person name="Hilbert H."/>
            <person name="Braun M."/>
            <person name="Holzer E."/>
            <person name="Brandt A."/>
            <person name="Peters S."/>
            <person name="van Staveren M."/>
            <person name="Dirkse W."/>
            <person name="Mooijman P."/>
            <person name="Klein Lankhorst R."/>
            <person name="Rose M."/>
            <person name="Hauf J."/>
            <person name="Koetter P."/>
            <person name="Berneiser S."/>
            <person name="Hempel S."/>
            <person name="Feldpausch M."/>
            <person name="Lamberth S."/>
            <person name="Van den Daele H."/>
            <person name="De Keyser A."/>
            <person name="Buysshaert C."/>
            <person name="Gielen J."/>
            <person name="Villarroel R."/>
            <person name="De Clercq R."/>
            <person name="van Montagu M."/>
            <person name="Rogers J."/>
            <person name="Cronin A."/>
            <person name="Quail M.A."/>
            <person name="Bray-Allen S."/>
            <person name="Clark L."/>
            <person name="Doggett J."/>
            <person name="Hall S."/>
            <person name="Kay M."/>
            <person name="Lennard N."/>
            <person name="McLay K."/>
            <person name="Mayes R."/>
            <person name="Pettett A."/>
            <person name="Rajandream M.A."/>
            <person name="Lyne M."/>
            <person name="Benes V."/>
            <person name="Rechmann S."/>
            <person name="Borkova D."/>
            <person name="Bloecker H."/>
            <person name="Scharfe M."/>
            <person name="Grimm M."/>
            <person name="Loehnert T.-H."/>
            <person name="Dose S."/>
            <person name="de Haan M."/>
            <person name="Maarse A.C."/>
            <person name="Schaefer M."/>
            <person name="Mueller-Auer S."/>
            <person name="Gabel C."/>
            <person name="Fuchs M."/>
            <person name="Fartmann B."/>
            <person name="Granderath K."/>
            <person name="Dauner D."/>
            <person name="Herzl A."/>
            <person name="Neumann S."/>
            <person name="Argiriou A."/>
            <person name="Vitale D."/>
            <person name="Liguori R."/>
            <person name="Piravandi E."/>
            <person name="Massenet O."/>
            <person name="Quigley F."/>
            <person name="Clabauld G."/>
            <person name="Muendlein A."/>
            <person name="Felber R."/>
            <person name="Schnabl S."/>
            <person name="Hiller R."/>
            <person name="Schmidt W."/>
            <person name="Lecharny A."/>
            <person name="Aubourg S."/>
            <person name="Chefdor F."/>
            <person name="Cooke R."/>
            <person name="Berger C."/>
            <person name="Monfort A."/>
            <person name="Casacuberta E."/>
            <person name="Gibbons T."/>
            <person name="Weber N."/>
            <person name="Vandenbol M."/>
            <person name="Bargues M."/>
            <person name="Terol J."/>
            <person name="Torres A."/>
            <person name="Perez-Perez A."/>
            <person name="Purnelle B."/>
            <person name="Bent E."/>
            <person name="Johnson S."/>
            <person name="Tacon D."/>
            <person name="Jesse T."/>
            <person name="Heijnen L."/>
            <person name="Schwarz S."/>
            <person name="Scholler P."/>
            <person name="Heber S."/>
            <person name="Francs P."/>
            <person name="Bielke C."/>
            <person name="Frishman D."/>
            <person name="Haase D."/>
            <person name="Lemcke K."/>
            <person name="Mewes H.-W."/>
            <person name="Stocker S."/>
            <person name="Zaccaria P."/>
            <person name="Bevan M."/>
            <person name="Wilson R.K."/>
            <person name="de la Bastide M."/>
            <person name="Habermann K."/>
            <person name="Parnell L."/>
            <person name="Dedhia N."/>
            <person name="Gnoj L."/>
            <person name="Schutz K."/>
            <person name="Huang E."/>
            <person name="Spiegel L."/>
            <person name="Sekhon M."/>
            <person name="Murray J."/>
            <person name="Sheet P."/>
            <person name="Cordes M."/>
            <person name="Abu-Threideh J."/>
            <person name="Stoneking T."/>
            <person name="Kalicki J."/>
            <person name="Graves T."/>
            <person name="Harmon G."/>
            <person name="Edwards J."/>
            <person name="Latreille P."/>
            <person name="Courtney L."/>
            <person name="Cloud J."/>
            <person name="Abbott A."/>
            <person name="Scott K."/>
            <person name="Johnson D."/>
            <person name="Minx P."/>
            <person name="Bentley D."/>
            <person name="Fulton B."/>
            <person name="Miller N."/>
            <person name="Greco T."/>
            <person name="Kemp K."/>
            <person name="Kramer J."/>
            <person name="Fulton L."/>
            <person name="Mardis E."/>
            <person name="Dante M."/>
            <person name="Pepin K."/>
            <person name="Hillier L.W."/>
            <person name="Nelson J."/>
            <person name="Spieth J."/>
            <person name="Ryan E."/>
            <person name="Andrews S."/>
            <person name="Geisel C."/>
            <person name="Layman D."/>
            <person name="Du H."/>
            <person name="Ali J."/>
            <person name="Berghoff A."/>
            <person name="Jones K."/>
            <person name="Drone K."/>
            <person name="Cotton M."/>
            <person name="Joshu C."/>
            <person name="Antonoiu B."/>
            <person name="Zidanic M."/>
            <person name="Strong C."/>
            <person name="Sun H."/>
            <person name="Lamar B."/>
            <person name="Yordan C."/>
            <person name="Ma P."/>
            <person name="Zhong J."/>
            <person name="Preston R."/>
            <person name="Vil D."/>
            <person name="Shekher M."/>
            <person name="Matero A."/>
            <person name="Shah R."/>
            <person name="Swaby I.K."/>
            <person name="O'Shaughnessy A."/>
            <person name="Rodriguez M."/>
            <person name="Hoffman J."/>
            <person name="Till S."/>
            <person name="Granat S."/>
            <person name="Shohdy N."/>
            <person name="Hasegawa A."/>
            <person name="Hameed A."/>
            <person name="Lodhi M."/>
            <person name="Johnson A."/>
            <person name="Chen E."/>
            <person name="Marra M.A."/>
            <person name="Martienssen R."/>
            <person name="McCombie W.R."/>
        </authorList>
    </citation>
    <scope>NUCLEOTIDE SEQUENCE [LARGE SCALE GENOMIC DNA]</scope>
    <source>
        <strain>cv. Columbia</strain>
    </source>
</reference>
<reference key="2">
    <citation type="journal article" date="2017" name="Plant J.">
        <title>Araport11: a complete reannotation of the Arabidopsis thaliana reference genome.</title>
        <authorList>
            <person name="Cheng C.Y."/>
            <person name="Krishnakumar V."/>
            <person name="Chan A.P."/>
            <person name="Thibaud-Nissen F."/>
            <person name="Schobel S."/>
            <person name="Town C.D."/>
        </authorList>
    </citation>
    <scope>GENOME REANNOTATION</scope>
    <source>
        <strain>cv. Columbia</strain>
    </source>
</reference>
<reference key="3">
    <citation type="journal article" date="2003" name="Science">
        <title>Empirical analysis of transcriptional activity in the Arabidopsis genome.</title>
        <authorList>
            <person name="Yamada K."/>
            <person name="Lim J."/>
            <person name="Dale J.M."/>
            <person name="Chen H."/>
            <person name="Shinn P."/>
            <person name="Palm C.J."/>
            <person name="Southwick A.M."/>
            <person name="Wu H.C."/>
            <person name="Kim C.J."/>
            <person name="Nguyen M."/>
            <person name="Pham P.K."/>
            <person name="Cheuk R.F."/>
            <person name="Karlin-Newmann G."/>
            <person name="Liu S.X."/>
            <person name="Lam B."/>
            <person name="Sakano H."/>
            <person name="Wu T."/>
            <person name="Yu G."/>
            <person name="Miranda M."/>
            <person name="Quach H.L."/>
            <person name="Tripp M."/>
            <person name="Chang C.H."/>
            <person name="Lee J.M."/>
            <person name="Toriumi M.J."/>
            <person name="Chan M.M."/>
            <person name="Tang C.C."/>
            <person name="Onodera C.S."/>
            <person name="Deng J.M."/>
            <person name="Akiyama K."/>
            <person name="Ansari Y."/>
            <person name="Arakawa T."/>
            <person name="Banh J."/>
            <person name="Banno F."/>
            <person name="Bowser L."/>
            <person name="Brooks S.Y."/>
            <person name="Carninci P."/>
            <person name="Chao Q."/>
            <person name="Choy N."/>
            <person name="Enju A."/>
            <person name="Goldsmith A.D."/>
            <person name="Gurjal M."/>
            <person name="Hansen N.F."/>
            <person name="Hayashizaki Y."/>
            <person name="Johnson-Hopson C."/>
            <person name="Hsuan V.W."/>
            <person name="Iida K."/>
            <person name="Karnes M."/>
            <person name="Khan S."/>
            <person name="Koesema E."/>
            <person name="Ishida J."/>
            <person name="Jiang P.X."/>
            <person name="Jones T."/>
            <person name="Kawai J."/>
            <person name="Kamiya A."/>
            <person name="Meyers C."/>
            <person name="Nakajima M."/>
            <person name="Narusaka M."/>
            <person name="Seki M."/>
            <person name="Sakurai T."/>
            <person name="Satou M."/>
            <person name="Tamse R."/>
            <person name="Vaysberg M."/>
            <person name="Wallender E.K."/>
            <person name="Wong C."/>
            <person name="Yamamura Y."/>
            <person name="Yuan S."/>
            <person name="Shinozaki K."/>
            <person name="Davis R.W."/>
            <person name="Theologis A."/>
            <person name="Ecker J.R."/>
        </authorList>
    </citation>
    <scope>NUCLEOTIDE SEQUENCE [LARGE SCALE MRNA]</scope>
    <source>
        <strain>cv. Columbia</strain>
    </source>
</reference>
<reference key="4">
    <citation type="journal article" date="2005" name="Plant Physiol.">
        <title>An expression and bioinformatics analysis of the Arabidopsis serine carboxypeptidase-like gene family.</title>
        <authorList>
            <person name="Fraser C.M."/>
            <person name="Rider L.W."/>
            <person name="Chapple C."/>
        </authorList>
    </citation>
    <scope>GENE FAMILY</scope>
    <scope>TISSUE SPECIFICITY</scope>
    <scope>NOMENCLATURE</scope>
</reference>
<name>SCP20_ARATH</name>
<organism>
    <name type="scientific">Arabidopsis thaliana</name>
    <name type="common">Mouse-ear cress</name>
    <dbReference type="NCBI Taxonomy" id="3702"/>
    <lineage>
        <taxon>Eukaryota</taxon>
        <taxon>Viridiplantae</taxon>
        <taxon>Streptophyta</taxon>
        <taxon>Embryophyta</taxon>
        <taxon>Tracheophyta</taxon>
        <taxon>Spermatophyta</taxon>
        <taxon>Magnoliopsida</taxon>
        <taxon>eudicotyledons</taxon>
        <taxon>Gunneridae</taxon>
        <taxon>Pentapetalae</taxon>
        <taxon>rosids</taxon>
        <taxon>malvids</taxon>
        <taxon>Brassicales</taxon>
        <taxon>Brassicaceae</taxon>
        <taxon>Camelineae</taxon>
        <taxon>Arabidopsis</taxon>
    </lineage>
</organism>